<proteinExistence type="inferred from homology"/>
<accession>A6RBC0</accession>
<sequence>MGGALSTDDPEQRASSVEELNQRLAHRFAAKCFEPLELTHLKENFFSRALDQHGIRYWNEEILSEFLGIPDGAGSAAAATSDGSLDAGPVIFRMVSYLGAFPFQNTMAPTVLTFESMVKVVVLLTERYGKVLKRGKKDRIKLLFGSLADVGRRDIITQLKEATEDSLESIGPFDPKSASPSTHNTGFLVDQPLNDEDEEDDDDLAIAALESLDAIEVFKHDQRIDKTVYESKISLTTFRRLLTLLLVTAPLRPLGRVSKFTTGLSKPSLDAVHEQVDSILAALEPGEASDGIGYKSFSKLVSTSLPYLFDPLTPLFEHLLFSKNLDLSRKRDSQTTNGLTNKPVPTPPSTPPISPPLSPVISTGGFDSRILNPAVLSHLSFFVSTNVHIPNIFRNRTHLHPVFSSTEHGESLTSFSHHVMTWQAPSILLVRGAVVSESSEEQLTTIGAYLPQPWKQTSSYSSRRSSEVPDPSTLPCLFELSPVHTVLQGSPSFSSLKPNMPVSHFSTKTGIAIGCVIPPSSRKSLGSDLHPKPAGGGSLLIDSALENATFIVSNGLNGPGVFLPPGISPVLSSTSLTASVASMSSSNQNITKSISIYNLEVWGIIPSTSLATQLDGSGSPIEKRDAISLQRAQWDFEAREAERRQAINMKVGGGEADVPTGRALLEMAGIIGDSYYSGHHRH</sequence>
<name>RTC5_AJECN</name>
<keyword id="KW-0963">Cytoplasm</keyword>
<keyword id="KW-1185">Reference proteome</keyword>
<gene>
    <name type="primary">RTC5</name>
    <name type="ORF">HCAG_06258</name>
</gene>
<reference key="1">
    <citation type="journal article" date="2009" name="Genome Res.">
        <title>Comparative genomic analyses of the human fungal pathogens Coccidioides and their relatives.</title>
        <authorList>
            <person name="Sharpton T.J."/>
            <person name="Stajich J.E."/>
            <person name="Rounsley S.D."/>
            <person name="Gardner M.J."/>
            <person name="Wortman J.R."/>
            <person name="Jordar V.S."/>
            <person name="Maiti R."/>
            <person name="Kodira C.D."/>
            <person name="Neafsey D.E."/>
            <person name="Zeng Q."/>
            <person name="Hung C.-Y."/>
            <person name="McMahan C."/>
            <person name="Muszewska A."/>
            <person name="Grynberg M."/>
            <person name="Mandel M.A."/>
            <person name="Kellner E.M."/>
            <person name="Barker B.M."/>
            <person name="Galgiani J.N."/>
            <person name="Orbach M.J."/>
            <person name="Kirkland T.N."/>
            <person name="Cole G.T."/>
            <person name="Henn M.R."/>
            <person name="Birren B.W."/>
            <person name="Taylor J.W."/>
        </authorList>
    </citation>
    <scope>NUCLEOTIDE SEQUENCE [LARGE SCALE GENOMIC DNA]</scope>
    <source>
        <strain>NAm1 / WU24</strain>
    </source>
</reference>
<protein>
    <recommendedName>
        <fullName>Restriction of telomere capping protein 5</fullName>
    </recommendedName>
</protein>
<feature type="chain" id="PRO_0000408806" description="Restriction of telomere capping protein 5">
    <location>
        <begin position="1"/>
        <end position="682"/>
    </location>
</feature>
<feature type="domain" description="TLDc" evidence="2">
    <location>
        <begin position="369"/>
        <end position="605"/>
    </location>
</feature>
<feature type="region of interest" description="Disordered" evidence="3">
    <location>
        <begin position="167"/>
        <end position="198"/>
    </location>
</feature>
<feature type="region of interest" description="Disordered" evidence="3">
    <location>
        <begin position="331"/>
        <end position="358"/>
    </location>
</feature>
<feature type="compositionally biased region" description="Pro residues" evidence="3">
    <location>
        <begin position="344"/>
        <end position="358"/>
    </location>
</feature>
<dbReference type="EMBL" id="CH476661">
    <property type="protein sequence ID" value="EDN10455.1"/>
    <property type="molecule type" value="Genomic_DNA"/>
</dbReference>
<dbReference type="SMR" id="A6RBC0"/>
<dbReference type="STRING" id="339724.A6RBC0"/>
<dbReference type="KEGG" id="aje:HCAG_06258"/>
<dbReference type="VEuPathDB" id="FungiDB:HCAG_06258"/>
<dbReference type="HOGENOM" id="CLU_011918_1_0_1"/>
<dbReference type="OMA" id="KWEFEAR"/>
<dbReference type="OrthoDB" id="10437at299071"/>
<dbReference type="Proteomes" id="UP000009297">
    <property type="component" value="Unassembled WGS sequence"/>
</dbReference>
<dbReference type="GO" id="GO:0005737">
    <property type="term" value="C:cytoplasm"/>
    <property type="evidence" value="ECO:0007669"/>
    <property type="project" value="UniProtKB-SubCell"/>
</dbReference>
<dbReference type="InterPro" id="IPR006571">
    <property type="entry name" value="TLDc_dom"/>
</dbReference>
<dbReference type="Pfam" id="PF07534">
    <property type="entry name" value="TLD"/>
    <property type="match status" value="1"/>
</dbReference>
<dbReference type="SMART" id="SM00584">
    <property type="entry name" value="TLDc"/>
    <property type="match status" value="1"/>
</dbReference>
<dbReference type="PROSITE" id="PS51886">
    <property type="entry name" value="TLDC"/>
    <property type="match status" value="1"/>
</dbReference>
<evidence type="ECO:0000250" key="1"/>
<evidence type="ECO:0000255" key="2">
    <source>
        <dbReference type="PROSITE-ProRule" id="PRU01234"/>
    </source>
</evidence>
<evidence type="ECO:0000256" key="3">
    <source>
        <dbReference type="SAM" id="MobiDB-lite"/>
    </source>
</evidence>
<evidence type="ECO:0000305" key="4"/>
<comment type="function">
    <text evidence="1">May be involved in a process influencing telomere capping.</text>
</comment>
<comment type="subcellular location">
    <subcellularLocation>
        <location evidence="1">Cytoplasm</location>
    </subcellularLocation>
</comment>
<comment type="similarity">
    <text evidence="4">Belongs to the RTC5 family.</text>
</comment>
<organism>
    <name type="scientific">Ajellomyces capsulatus (strain NAm1 / WU24)</name>
    <name type="common">Darling's disease fungus</name>
    <name type="synonym">Histoplasma capsulatum</name>
    <dbReference type="NCBI Taxonomy" id="2059318"/>
    <lineage>
        <taxon>Eukaryota</taxon>
        <taxon>Fungi</taxon>
        <taxon>Dikarya</taxon>
        <taxon>Ascomycota</taxon>
        <taxon>Pezizomycotina</taxon>
        <taxon>Eurotiomycetes</taxon>
        <taxon>Eurotiomycetidae</taxon>
        <taxon>Onygenales</taxon>
        <taxon>Ajellomycetaceae</taxon>
        <taxon>Histoplasma</taxon>
    </lineage>
</organism>